<comment type="function">
    <text evidence="1">Required for the expression of anaerobic nitric oxide (NO) reductase, acts as a transcriptional activator for at least the norVW operon. Activation also requires sigma-54.</text>
</comment>
<comment type="pathway">
    <text evidence="1">Nitrogen metabolism; nitric oxide reduction.</text>
</comment>
<comment type="sequence caution" evidence="2">
    <conflict type="erroneous initiation">
        <sequence resource="EMBL-CDS" id="ABP61845"/>
    </conflict>
</comment>
<protein>
    <recommendedName>
        <fullName evidence="1">Anaerobic nitric oxide reductase transcription regulator NorR</fullName>
    </recommendedName>
</protein>
<organism>
    <name type="scientific">Enterobacter sp. (strain 638)</name>
    <dbReference type="NCBI Taxonomy" id="399742"/>
    <lineage>
        <taxon>Bacteria</taxon>
        <taxon>Pseudomonadati</taxon>
        <taxon>Pseudomonadota</taxon>
        <taxon>Gammaproteobacteria</taxon>
        <taxon>Enterobacterales</taxon>
        <taxon>Enterobacteriaceae</taxon>
        <taxon>Enterobacter</taxon>
    </lineage>
</organism>
<evidence type="ECO:0000255" key="1">
    <source>
        <dbReference type="HAMAP-Rule" id="MF_01314"/>
    </source>
</evidence>
<evidence type="ECO:0000305" key="2"/>
<accession>A4WDR5</accession>
<reference key="1">
    <citation type="journal article" date="2010" name="PLoS Genet.">
        <title>Genome sequence of the plant growth promoting endophytic bacterium Enterobacter sp. 638.</title>
        <authorList>
            <person name="Taghavi S."/>
            <person name="van der Lelie D."/>
            <person name="Hoffman A."/>
            <person name="Zhang Y.B."/>
            <person name="Walla M.D."/>
            <person name="Vangronsveld J."/>
            <person name="Newman L."/>
            <person name="Monchy S."/>
        </authorList>
    </citation>
    <scope>NUCLEOTIDE SEQUENCE [LARGE SCALE GENOMIC DNA]</scope>
    <source>
        <strain>638</strain>
    </source>
</reference>
<dbReference type="EMBL" id="CP000653">
    <property type="protein sequence ID" value="ABP61845.1"/>
    <property type="status" value="ALT_INIT"/>
    <property type="molecule type" value="Genomic_DNA"/>
</dbReference>
<dbReference type="RefSeq" id="WP_041689505.1">
    <property type="nucleotide sequence ID" value="NC_009436.1"/>
</dbReference>
<dbReference type="SMR" id="A4WDR5"/>
<dbReference type="STRING" id="399742.Ent638_3181"/>
<dbReference type="KEGG" id="ent:Ent638_3181"/>
<dbReference type="eggNOG" id="COG3604">
    <property type="taxonomic scope" value="Bacteria"/>
</dbReference>
<dbReference type="HOGENOM" id="CLU_000445_125_2_6"/>
<dbReference type="OrthoDB" id="9804019at2"/>
<dbReference type="UniPathway" id="UPA00638"/>
<dbReference type="Proteomes" id="UP000000230">
    <property type="component" value="Chromosome"/>
</dbReference>
<dbReference type="GO" id="GO:0005524">
    <property type="term" value="F:ATP binding"/>
    <property type="evidence" value="ECO:0007669"/>
    <property type="project" value="UniProtKB-UniRule"/>
</dbReference>
<dbReference type="GO" id="GO:0016887">
    <property type="term" value="F:ATP hydrolysis activity"/>
    <property type="evidence" value="ECO:0007669"/>
    <property type="project" value="InterPro"/>
</dbReference>
<dbReference type="GO" id="GO:0003677">
    <property type="term" value="F:DNA binding"/>
    <property type="evidence" value="ECO:0007669"/>
    <property type="project" value="UniProtKB-KW"/>
</dbReference>
<dbReference type="GO" id="GO:0003700">
    <property type="term" value="F:DNA-binding transcription factor activity"/>
    <property type="evidence" value="ECO:0007669"/>
    <property type="project" value="UniProtKB-UniRule"/>
</dbReference>
<dbReference type="GO" id="GO:0000160">
    <property type="term" value="P:phosphorelay signal transduction system"/>
    <property type="evidence" value="ECO:0007669"/>
    <property type="project" value="UniProtKB-UniRule"/>
</dbReference>
<dbReference type="CDD" id="cd00009">
    <property type="entry name" value="AAA"/>
    <property type="match status" value="1"/>
</dbReference>
<dbReference type="FunFam" id="1.10.8.60:FF:000045">
    <property type="entry name" value="Anaerobic nitric oxide reductase transcription regulator NorR"/>
    <property type="match status" value="1"/>
</dbReference>
<dbReference type="FunFam" id="3.30.450.40:FF:000021">
    <property type="entry name" value="Anaerobic nitric oxide reductase transcription regulator NorR"/>
    <property type="match status" value="1"/>
</dbReference>
<dbReference type="FunFam" id="3.40.50.300:FF:000006">
    <property type="entry name" value="DNA-binding transcriptional regulator NtrC"/>
    <property type="match status" value="1"/>
</dbReference>
<dbReference type="Gene3D" id="1.10.8.60">
    <property type="match status" value="1"/>
</dbReference>
<dbReference type="Gene3D" id="3.30.450.40">
    <property type="match status" value="1"/>
</dbReference>
<dbReference type="Gene3D" id="1.10.10.60">
    <property type="entry name" value="Homeodomain-like"/>
    <property type="match status" value="1"/>
</dbReference>
<dbReference type="Gene3D" id="3.40.50.300">
    <property type="entry name" value="P-loop containing nucleotide triphosphate hydrolases"/>
    <property type="match status" value="1"/>
</dbReference>
<dbReference type="HAMAP" id="MF_01314">
    <property type="entry name" value="NorR"/>
    <property type="match status" value="1"/>
</dbReference>
<dbReference type="InterPro" id="IPR003593">
    <property type="entry name" value="AAA+_ATPase"/>
</dbReference>
<dbReference type="InterPro" id="IPR003018">
    <property type="entry name" value="GAF"/>
</dbReference>
<dbReference type="InterPro" id="IPR029016">
    <property type="entry name" value="GAF-like_dom_sf"/>
</dbReference>
<dbReference type="InterPro" id="IPR009057">
    <property type="entry name" value="Homeodomain-like_sf"/>
</dbReference>
<dbReference type="InterPro" id="IPR023944">
    <property type="entry name" value="NorR"/>
</dbReference>
<dbReference type="InterPro" id="IPR027417">
    <property type="entry name" value="P-loop_NTPase"/>
</dbReference>
<dbReference type="InterPro" id="IPR002078">
    <property type="entry name" value="Sigma_54_int"/>
</dbReference>
<dbReference type="InterPro" id="IPR025662">
    <property type="entry name" value="Sigma_54_int_dom_ATP-bd_1"/>
</dbReference>
<dbReference type="InterPro" id="IPR025943">
    <property type="entry name" value="Sigma_54_int_dom_ATP-bd_2"/>
</dbReference>
<dbReference type="InterPro" id="IPR025944">
    <property type="entry name" value="Sigma_54_int_dom_CS"/>
</dbReference>
<dbReference type="NCBIfam" id="NF003451">
    <property type="entry name" value="PRK05022.1"/>
    <property type="match status" value="1"/>
</dbReference>
<dbReference type="PANTHER" id="PTHR32071:SF35">
    <property type="entry name" value="ANAEROBIC NITRIC OXIDE REDUCTASE TRANSCRIPTION REGULATOR NORR"/>
    <property type="match status" value="1"/>
</dbReference>
<dbReference type="PANTHER" id="PTHR32071">
    <property type="entry name" value="TRANSCRIPTIONAL REGULATORY PROTEIN"/>
    <property type="match status" value="1"/>
</dbReference>
<dbReference type="Pfam" id="PF01590">
    <property type="entry name" value="GAF"/>
    <property type="match status" value="1"/>
</dbReference>
<dbReference type="Pfam" id="PF00158">
    <property type="entry name" value="Sigma54_activat"/>
    <property type="match status" value="1"/>
</dbReference>
<dbReference type="SMART" id="SM00382">
    <property type="entry name" value="AAA"/>
    <property type="match status" value="1"/>
</dbReference>
<dbReference type="SMART" id="SM00065">
    <property type="entry name" value="GAF"/>
    <property type="match status" value="1"/>
</dbReference>
<dbReference type="SUPFAM" id="SSF55781">
    <property type="entry name" value="GAF domain-like"/>
    <property type="match status" value="1"/>
</dbReference>
<dbReference type="SUPFAM" id="SSF46689">
    <property type="entry name" value="Homeodomain-like"/>
    <property type="match status" value="1"/>
</dbReference>
<dbReference type="SUPFAM" id="SSF52540">
    <property type="entry name" value="P-loop containing nucleoside triphosphate hydrolases"/>
    <property type="match status" value="1"/>
</dbReference>
<dbReference type="PROSITE" id="PS00675">
    <property type="entry name" value="SIGMA54_INTERACT_1"/>
    <property type="match status" value="1"/>
</dbReference>
<dbReference type="PROSITE" id="PS00676">
    <property type="entry name" value="SIGMA54_INTERACT_2"/>
    <property type="match status" value="1"/>
</dbReference>
<dbReference type="PROSITE" id="PS00688">
    <property type="entry name" value="SIGMA54_INTERACT_3"/>
    <property type="match status" value="1"/>
</dbReference>
<dbReference type="PROSITE" id="PS50045">
    <property type="entry name" value="SIGMA54_INTERACT_4"/>
    <property type="match status" value="1"/>
</dbReference>
<feature type="chain" id="PRO_0000341318" description="Anaerobic nitric oxide reductase transcription regulator NorR">
    <location>
        <begin position="1"/>
        <end position="504"/>
    </location>
</feature>
<feature type="domain" description="Sigma-54 factor interaction" evidence="1">
    <location>
        <begin position="187"/>
        <end position="416"/>
    </location>
</feature>
<feature type="DNA-binding region" description="H-T-H motif" evidence="1">
    <location>
        <begin position="479"/>
        <end position="498"/>
    </location>
</feature>
<feature type="binding site" evidence="1">
    <location>
        <begin position="215"/>
        <end position="222"/>
    </location>
    <ligand>
        <name>ATP</name>
        <dbReference type="ChEBI" id="CHEBI:30616"/>
    </ligand>
</feature>
<feature type="binding site" evidence="1">
    <location>
        <begin position="278"/>
        <end position="287"/>
    </location>
    <ligand>
        <name>ATP</name>
        <dbReference type="ChEBI" id="CHEBI:30616"/>
    </ligand>
</feature>
<feature type="modified residue" description="4-aspartylphosphate" evidence="1">
    <location>
        <position position="57"/>
    </location>
</feature>
<keyword id="KW-0067">ATP-binding</keyword>
<keyword id="KW-0238">DNA-binding</keyword>
<keyword id="KW-0547">Nucleotide-binding</keyword>
<keyword id="KW-0597">Phosphoprotein</keyword>
<keyword id="KW-0804">Transcription</keyword>
<keyword id="KW-0805">Transcription regulation</keyword>
<proteinExistence type="inferred from homology"/>
<sequence>MSFSVEVLARIAIELQTGIGHQDRFQRLISTLRHVLDCDASALLRYEGRQFIPLAIDGLAHDVLGRRFTLEGHPRLETIARAGDVVRFPADSDLPDPYDGLIPGQESLKVHACIGLPLFAGQNLIGALTLDGLEPDQFDTFSDEELRLIAALASGALNNALLIEQLESQNIMPGSPVAFEHVAHTEMIGLSPGMMQLKKEIEIVAASDLNVLIGGETGTGKELVAKSIHEASPRAVNPLVYLNCAALPESVAESELFGHVKGAFTGAISNRSGKFEMADNGTLFLDEIGELSLALQAKLLRVLQYGDIQRVGDDRSLRVDVRVLAATNRDLREEVLAGNFRADLFHRLSVFPLSVPPLRERGEDVVLLAGFFCEQCRLKMGLSRVVLSPGARSHLLSYGWPGNVRELEHAIHRAVVLARAARLGDDVVIHARHFALHDEAAPAVAQELPAIANENLREATEAFQRQMITRALDQNGRSWAACARALEMDVANLHRLAKRLGLKG</sequence>
<gene>
    <name evidence="1" type="primary">norR</name>
    <name type="ordered locus">Ent638_3181</name>
</gene>
<name>NORR_ENT38</name>